<proteinExistence type="inferred from homology"/>
<gene>
    <name type="primary">OPG105</name>
    <name type="synonym">RPO147</name>
    <name type="ORF">J6R</name>
    <name type="ORF">L6R</name>
</gene>
<accession>P0DOO2</accession>
<accession>P33053</accession>
<organism>
    <name type="scientific">Variola virus</name>
    <dbReference type="NCBI Taxonomy" id="10255"/>
    <lineage>
        <taxon>Viruses</taxon>
        <taxon>Varidnaviria</taxon>
        <taxon>Bamfordvirae</taxon>
        <taxon>Nucleocytoviricota</taxon>
        <taxon>Pokkesviricetes</taxon>
        <taxon>Chitovirales</taxon>
        <taxon>Poxviridae</taxon>
        <taxon>Chordopoxvirinae</taxon>
        <taxon>Orthopoxvirus</taxon>
    </lineage>
</organism>
<reference key="1">
    <citation type="journal article" date="1993" name="Nature">
        <title>Potential virulence determinants in terminal regions of variola smallpox virus genome.</title>
        <authorList>
            <person name="Massung R.F."/>
            <person name="Esposito J.J."/>
            <person name="Liu L.I."/>
            <person name="Qi J."/>
            <person name="Utterback T.R."/>
            <person name="Knight J.C."/>
            <person name="Aubin L."/>
            <person name="Yuran T.E."/>
            <person name="Parsons J.M."/>
            <person name="Loparev V.N."/>
            <person name="Selivanov N.A."/>
            <person name="Cavallaro K.F."/>
            <person name="Kerlavage A.R."/>
            <person name="Mahy B.W.J."/>
            <person name="Venter J.C."/>
        </authorList>
    </citation>
    <scope>NUCLEOTIDE SEQUENCE [GENOMIC DNA]</scope>
    <source>
        <strain>Bangladesh-1975</strain>
    </source>
</reference>
<organismHost>
    <name type="scientific">Homo sapiens</name>
    <name type="common">Human</name>
    <dbReference type="NCBI Taxonomy" id="9606"/>
</organismHost>
<name>RP147_VARV</name>
<comment type="function">
    <text evidence="1">Part of the DNA-dependent RNA polymerase which catalyzes the transcription of viral DNA into RNA using the four ribonucleoside triphosphates as substrates. Responsible for the transcription of early, intermediate and late genes. DNA-dependent RNA polymerase associates with the early transcription factor (ETF), itself composed of OPG118 and OPG133, thereby allowing the early genes transcription. Late transcription, and probably also intermediate transcription, require newly synthesized RNA polymerase.</text>
</comment>
<comment type="catalytic activity">
    <reaction evidence="1">
        <text>RNA(n) + a ribonucleoside 5'-triphosphate = RNA(n+1) + diphosphate</text>
        <dbReference type="Rhea" id="RHEA:21248"/>
        <dbReference type="Rhea" id="RHEA-COMP:14527"/>
        <dbReference type="Rhea" id="RHEA-COMP:17342"/>
        <dbReference type="ChEBI" id="CHEBI:33019"/>
        <dbReference type="ChEBI" id="CHEBI:61557"/>
        <dbReference type="ChEBI" id="CHEBI:140395"/>
        <dbReference type="EC" id="2.7.7.6"/>
    </reaction>
</comment>
<comment type="subunit">
    <text evidence="1">The DNA-dependent RNA polymerase used for intermediate and late genes expression consists of eight subunits Rpo30/OPG66, Rpo7/OPG90, Rpo22/OPG103, Rpo147/OPG105, Rpo18/OPG119, Rpo19/OPG131, Rpo132/OPG151 and Rpo35/OPG156. The same holoenzyme, with the addition of the transcription-specificity factor OPG109, is used for early gene expression.</text>
</comment>
<comment type="subcellular location">
    <subcellularLocation>
        <location evidence="1">Virion</location>
    </subcellularLocation>
    <text evidence="1">All the enzymes and other proteins required to synthesize early mRNAs are packaged within the virion core along with the DNA genome. This is necessary because viral early mRNAs are synthesized within minutes after virus entry into the cell and are extruded through pores in the core particle.</text>
</comment>
<comment type="similarity">
    <text evidence="2">Belongs to the poxviridae DNA-directed RNA polymerase 147 kDa subunit family.</text>
</comment>
<sequence>MAVISKVTYSLYDQKEINATDIIISHVKNDDDIGTVKDGRLGAMDGALCKTCGKTELECFGHWGKVSIYKTHIVKPEFISEIIRLLNHICIHCGLLRSREPYSNDINLKELSGHALRRLKDKILSKKKSCWNSECMQPYQKISFSKKKVCFVNKLDDINVPNSLIYQKLISIHEKFWPLLEIYQYPANLFYTDYFPIPPLIIRPAISFWIDSIPKETNELTYLLGMIVKNCNLNADEQVIQKAVIEYDDIKIISNNTTSINLSYITSGKNNMIRSYIVARRKDQTARSVIGPSTSITVNEVGMPAYIRNTLTEKIFVNAFTVNKVKQLLASNQVKFYFNKRLNQLTRIRQGKFIKNKIHLLPGDWVEVAVQEYTSIIFGRQPSLHRYNVIASSIRATEGDTIKISPGIANSQNADFDGDEEWMILEQNPKAVVEQSILMYPTTLLKHDIHGAPVYGSIQDEIVAAYSLFRIQDLCLDEVLNILGKYGREFDPKGKCKFSGKDIYTYLIGEKINYPGLLKDGEIIANDVDSNFVVAMRHLSLAGLLSDHKSNVEGINFIIKSSYVFKRYLSIYGFGVTFKDLRPNSTFTNKLEAINVEKIELIKEAYAKYLKDVRDGKIVPLSKALEADYVESMLSNLTNLNIREIEEHMRQTLIDNPDNNLLKMAKAGYKVNPTELMYILGTYGQQRIDGEPAETRVLGRVLPYYLPDSKDPEGRGYILNSLTKGLTGSQYYFSMLVARSQSTDIVCETSRTGTLARKIIKKMEDMVVDGYGQVVIGNTLIKYAANYTKILGSVCKPVDLIYPDESMTWYLEISALWNKIKQGFVYSQKQKLAKKTLAPFNFLVFVKPTTEDNAIKVKDLYDMIHNVIDDVREKYFFTVSNIDFMEYIFLTHLNPSRIRITKETAITIFEKFYEKLNYTLGGGTPIGIISAQVLSEKFTQQALSSFHTTEKSGAVKQKLGFNEFNNLTNLSKNKTEIITLVSDDISKLQSVKINFEFVCLGELNPNITLRKETDRYVVDIIVNRLYIKRAEITELVVEYMIERFISFSVIVKEWGMETFIEDEDNIRFTVYLNFVEPEELNLSKFMMVLPGAANKGKISKFKIPISDYTGYDDFNQTKKLNKMTVELMNLKELGSFDLENVNVYPGVWNTYDIFGIEAARGYLCEAMLNTYGEGFDYLYQPCDLLASLLCASYEPESVNKFKFGAASTLKRATFGDNKALLNAALHKKSEPINDNSSCHFFSKVPNIGTGYYKYFIDLGLLMRMERKLSDKISSQKIKEMEETEDF</sequence>
<dbReference type="EC" id="2.7.7.6"/>
<dbReference type="EMBL" id="L22579">
    <property type="protein sequence ID" value="AAA60831.1"/>
    <property type="molecule type" value="Genomic_DNA"/>
</dbReference>
<dbReference type="PIR" id="T28521">
    <property type="entry name" value="T28521"/>
</dbReference>
<dbReference type="RefSeq" id="NP_042127.1">
    <property type="nucleotide sequence ID" value="NC_001611.1"/>
</dbReference>
<dbReference type="SMR" id="P0DOO2"/>
<dbReference type="GeneID" id="1486469"/>
<dbReference type="KEGG" id="vg:1486469"/>
<dbReference type="Proteomes" id="UP000119805">
    <property type="component" value="Segment"/>
</dbReference>
<dbReference type="GO" id="GO:0000428">
    <property type="term" value="C:DNA-directed RNA polymerase complex"/>
    <property type="evidence" value="ECO:0007669"/>
    <property type="project" value="UniProtKB-KW"/>
</dbReference>
<dbReference type="GO" id="GO:0044423">
    <property type="term" value="C:virion component"/>
    <property type="evidence" value="ECO:0007669"/>
    <property type="project" value="UniProtKB-KW"/>
</dbReference>
<dbReference type="GO" id="GO:0003677">
    <property type="term" value="F:DNA binding"/>
    <property type="evidence" value="ECO:0007669"/>
    <property type="project" value="InterPro"/>
</dbReference>
<dbReference type="GO" id="GO:0003899">
    <property type="term" value="F:DNA-directed RNA polymerase activity"/>
    <property type="evidence" value="ECO:0007669"/>
    <property type="project" value="UniProtKB-EC"/>
</dbReference>
<dbReference type="GO" id="GO:0006351">
    <property type="term" value="P:DNA-templated transcription"/>
    <property type="evidence" value="ECO:0007669"/>
    <property type="project" value="InterPro"/>
</dbReference>
<dbReference type="Gene3D" id="1.10.132.30">
    <property type="match status" value="1"/>
</dbReference>
<dbReference type="Gene3D" id="2.40.40.20">
    <property type="match status" value="1"/>
</dbReference>
<dbReference type="Gene3D" id="6.10.250.2940">
    <property type="match status" value="1"/>
</dbReference>
<dbReference type="Gene3D" id="3.30.1490.180">
    <property type="entry name" value="RNA polymerase ii"/>
    <property type="match status" value="1"/>
</dbReference>
<dbReference type="Gene3D" id="4.10.860.120">
    <property type="entry name" value="RNA polymerase II, clamp domain"/>
    <property type="match status" value="1"/>
</dbReference>
<dbReference type="InterPro" id="IPR045867">
    <property type="entry name" value="DNA-dir_RpoC_beta_prime"/>
</dbReference>
<dbReference type="InterPro" id="IPR000722">
    <property type="entry name" value="RNA_pol_asu"/>
</dbReference>
<dbReference type="InterPro" id="IPR006592">
    <property type="entry name" value="RNA_pol_N"/>
</dbReference>
<dbReference type="InterPro" id="IPR007080">
    <property type="entry name" value="RNA_pol_Rpb1_1"/>
</dbReference>
<dbReference type="InterPro" id="IPR007066">
    <property type="entry name" value="RNA_pol_Rpb1_3"/>
</dbReference>
<dbReference type="InterPro" id="IPR007083">
    <property type="entry name" value="RNA_pol_Rpb1_4"/>
</dbReference>
<dbReference type="InterPro" id="IPR007081">
    <property type="entry name" value="RNA_pol_Rpb1_5"/>
</dbReference>
<dbReference type="InterPro" id="IPR044893">
    <property type="entry name" value="RNA_pol_Rpb1_clamp_domain"/>
</dbReference>
<dbReference type="InterPro" id="IPR038120">
    <property type="entry name" value="Rpb1_funnel_sf"/>
</dbReference>
<dbReference type="PANTHER" id="PTHR19376">
    <property type="entry name" value="DNA-DIRECTED RNA POLYMERASE"/>
    <property type="match status" value="1"/>
</dbReference>
<dbReference type="PANTHER" id="PTHR19376:SF32">
    <property type="entry name" value="DNA-DIRECTED RNA POLYMERASE III SUBUNIT RPC1"/>
    <property type="match status" value="1"/>
</dbReference>
<dbReference type="Pfam" id="PF04997">
    <property type="entry name" value="RNA_pol_Rpb1_1"/>
    <property type="match status" value="1"/>
</dbReference>
<dbReference type="Pfam" id="PF00623">
    <property type="entry name" value="RNA_pol_Rpb1_2"/>
    <property type="match status" value="1"/>
</dbReference>
<dbReference type="Pfam" id="PF04983">
    <property type="entry name" value="RNA_pol_Rpb1_3"/>
    <property type="match status" value="1"/>
</dbReference>
<dbReference type="Pfam" id="PF05000">
    <property type="entry name" value="RNA_pol_Rpb1_4"/>
    <property type="match status" value="1"/>
</dbReference>
<dbReference type="Pfam" id="PF04998">
    <property type="entry name" value="RNA_pol_Rpb1_5"/>
    <property type="match status" value="1"/>
</dbReference>
<dbReference type="SMART" id="SM00663">
    <property type="entry name" value="RPOLA_N"/>
    <property type="match status" value="1"/>
</dbReference>
<dbReference type="SUPFAM" id="SSF64484">
    <property type="entry name" value="beta and beta-prime subunits of DNA dependent RNA-polymerase"/>
    <property type="match status" value="1"/>
</dbReference>
<evidence type="ECO:0000250" key="1">
    <source>
        <dbReference type="UniProtKB" id="O57204"/>
    </source>
</evidence>
<evidence type="ECO:0000305" key="2"/>
<feature type="chain" id="PRO_0000448123" description="DNA-directed RNA polymerase 147 kDa polypeptide">
    <location>
        <begin position="1"/>
        <end position="1286"/>
    </location>
</feature>
<keyword id="KW-0240">DNA-directed RNA polymerase</keyword>
<keyword id="KW-0244">Early protein</keyword>
<keyword id="KW-0548">Nucleotidyltransferase</keyword>
<keyword id="KW-0804">Transcription</keyword>
<keyword id="KW-0808">Transferase</keyword>
<keyword id="KW-0946">Virion</keyword>
<protein>
    <recommendedName>
        <fullName>DNA-directed RNA polymerase 147 kDa polypeptide</fullName>
        <ecNumber>2.7.7.6</ecNumber>
    </recommendedName>
</protein>